<gene>
    <name evidence="1" type="primary">tdh</name>
    <name type="ordered locus">BURPS1710b_A1512</name>
</gene>
<reference key="1">
    <citation type="journal article" date="2010" name="Genome Biol. Evol.">
        <title>Continuing evolution of Burkholderia mallei through genome reduction and large-scale rearrangements.</title>
        <authorList>
            <person name="Losada L."/>
            <person name="Ronning C.M."/>
            <person name="DeShazer D."/>
            <person name="Woods D."/>
            <person name="Fedorova N."/>
            <person name="Kim H.S."/>
            <person name="Shabalina S.A."/>
            <person name="Pearson T.R."/>
            <person name="Brinkac L."/>
            <person name="Tan P."/>
            <person name="Nandi T."/>
            <person name="Crabtree J."/>
            <person name="Badger J."/>
            <person name="Beckstrom-Sternberg S."/>
            <person name="Saqib M."/>
            <person name="Schutzer S.E."/>
            <person name="Keim P."/>
            <person name="Nierman W.C."/>
        </authorList>
    </citation>
    <scope>NUCLEOTIDE SEQUENCE [LARGE SCALE GENOMIC DNA]</scope>
    <source>
        <strain>1710b</strain>
    </source>
</reference>
<dbReference type="EC" id="1.1.1.103" evidence="1"/>
<dbReference type="EMBL" id="CP000125">
    <property type="protein sequence ID" value="ABA52973.1"/>
    <property type="molecule type" value="Genomic_DNA"/>
</dbReference>
<dbReference type="RefSeq" id="WP_004194543.1">
    <property type="nucleotide sequence ID" value="NC_007435.1"/>
</dbReference>
<dbReference type="SMR" id="Q3JID4"/>
<dbReference type="EnsemblBacteria" id="ABA52973">
    <property type="protein sequence ID" value="ABA52973"/>
    <property type="gene ID" value="BURPS1710b_A1512"/>
</dbReference>
<dbReference type="GeneID" id="93062068"/>
<dbReference type="KEGG" id="bpm:BURPS1710b_A1512"/>
<dbReference type="HOGENOM" id="CLU_026673_11_0_4"/>
<dbReference type="UniPathway" id="UPA00046">
    <property type="reaction ID" value="UER00505"/>
</dbReference>
<dbReference type="Proteomes" id="UP000002700">
    <property type="component" value="Chromosome II"/>
</dbReference>
<dbReference type="GO" id="GO:0005737">
    <property type="term" value="C:cytoplasm"/>
    <property type="evidence" value="ECO:0007669"/>
    <property type="project" value="UniProtKB-SubCell"/>
</dbReference>
<dbReference type="GO" id="GO:0008743">
    <property type="term" value="F:L-threonine 3-dehydrogenase activity"/>
    <property type="evidence" value="ECO:0007669"/>
    <property type="project" value="UniProtKB-UniRule"/>
</dbReference>
<dbReference type="GO" id="GO:0008270">
    <property type="term" value="F:zinc ion binding"/>
    <property type="evidence" value="ECO:0007669"/>
    <property type="project" value="UniProtKB-UniRule"/>
</dbReference>
<dbReference type="GO" id="GO:0019518">
    <property type="term" value="P:L-threonine catabolic process to glycine"/>
    <property type="evidence" value="ECO:0007669"/>
    <property type="project" value="UniProtKB-UniPathway"/>
</dbReference>
<dbReference type="Gene3D" id="3.90.180.10">
    <property type="entry name" value="Medium-chain alcohol dehydrogenases, catalytic domain"/>
    <property type="match status" value="1"/>
</dbReference>
<dbReference type="Gene3D" id="3.40.50.720">
    <property type="entry name" value="NAD(P)-binding Rossmann-like Domain"/>
    <property type="match status" value="1"/>
</dbReference>
<dbReference type="HAMAP" id="MF_00627">
    <property type="entry name" value="Thr_dehydrog"/>
    <property type="match status" value="1"/>
</dbReference>
<dbReference type="InterPro" id="IPR013149">
    <property type="entry name" value="ADH-like_C"/>
</dbReference>
<dbReference type="InterPro" id="IPR013154">
    <property type="entry name" value="ADH-like_N"/>
</dbReference>
<dbReference type="InterPro" id="IPR002328">
    <property type="entry name" value="ADH_Zn_CS"/>
</dbReference>
<dbReference type="InterPro" id="IPR011032">
    <property type="entry name" value="GroES-like_sf"/>
</dbReference>
<dbReference type="InterPro" id="IPR004627">
    <property type="entry name" value="L-Threonine_3-DHase"/>
</dbReference>
<dbReference type="InterPro" id="IPR036291">
    <property type="entry name" value="NAD(P)-bd_dom_sf"/>
</dbReference>
<dbReference type="InterPro" id="IPR020843">
    <property type="entry name" value="PKS_ER"/>
</dbReference>
<dbReference type="InterPro" id="IPR050129">
    <property type="entry name" value="Zn_alcohol_dh"/>
</dbReference>
<dbReference type="NCBIfam" id="NF003808">
    <property type="entry name" value="PRK05396.1"/>
    <property type="match status" value="1"/>
</dbReference>
<dbReference type="NCBIfam" id="TIGR00692">
    <property type="entry name" value="tdh"/>
    <property type="match status" value="1"/>
</dbReference>
<dbReference type="PANTHER" id="PTHR43401">
    <property type="entry name" value="L-THREONINE 3-DEHYDROGENASE"/>
    <property type="match status" value="1"/>
</dbReference>
<dbReference type="PANTHER" id="PTHR43401:SF2">
    <property type="entry name" value="L-THREONINE 3-DEHYDROGENASE"/>
    <property type="match status" value="1"/>
</dbReference>
<dbReference type="Pfam" id="PF08240">
    <property type="entry name" value="ADH_N"/>
    <property type="match status" value="1"/>
</dbReference>
<dbReference type="Pfam" id="PF00107">
    <property type="entry name" value="ADH_zinc_N"/>
    <property type="match status" value="1"/>
</dbReference>
<dbReference type="SMART" id="SM00829">
    <property type="entry name" value="PKS_ER"/>
    <property type="match status" value="1"/>
</dbReference>
<dbReference type="SUPFAM" id="SSF50129">
    <property type="entry name" value="GroES-like"/>
    <property type="match status" value="1"/>
</dbReference>
<dbReference type="SUPFAM" id="SSF51735">
    <property type="entry name" value="NAD(P)-binding Rossmann-fold domains"/>
    <property type="match status" value="1"/>
</dbReference>
<dbReference type="PROSITE" id="PS00059">
    <property type="entry name" value="ADH_ZINC"/>
    <property type="match status" value="1"/>
</dbReference>
<feature type="chain" id="PRO_1000051624" description="L-threonine 3-dehydrogenase">
    <location>
        <begin position="1"/>
        <end position="343"/>
    </location>
</feature>
<feature type="active site" description="Charge relay system" evidence="1">
    <location>
        <position position="40"/>
    </location>
</feature>
<feature type="active site" description="Charge relay system" evidence="1">
    <location>
        <position position="43"/>
    </location>
</feature>
<feature type="binding site" evidence="1">
    <location>
        <position position="38"/>
    </location>
    <ligand>
        <name>Zn(2+)</name>
        <dbReference type="ChEBI" id="CHEBI:29105"/>
        <label>1</label>
        <note>catalytic</note>
    </ligand>
</feature>
<feature type="binding site" evidence="1">
    <location>
        <position position="63"/>
    </location>
    <ligand>
        <name>Zn(2+)</name>
        <dbReference type="ChEBI" id="CHEBI:29105"/>
        <label>1</label>
        <note>catalytic</note>
    </ligand>
</feature>
<feature type="binding site" evidence="1">
    <location>
        <position position="64"/>
    </location>
    <ligand>
        <name>Zn(2+)</name>
        <dbReference type="ChEBI" id="CHEBI:29105"/>
        <label>1</label>
        <note>catalytic</note>
    </ligand>
</feature>
<feature type="binding site" evidence="1">
    <location>
        <position position="93"/>
    </location>
    <ligand>
        <name>Zn(2+)</name>
        <dbReference type="ChEBI" id="CHEBI:29105"/>
        <label>2</label>
    </ligand>
</feature>
<feature type="binding site" evidence="1">
    <location>
        <position position="96"/>
    </location>
    <ligand>
        <name>Zn(2+)</name>
        <dbReference type="ChEBI" id="CHEBI:29105"/>
        <label>2</label>
    </ligand>
</feature>
<feature type="binding site" evidence="1">
    <location>
        <position position="99"/>
    </location>
    <ligand>
        <name>Zn(2+)</name>
        <dbReference type="ChEBI" id="CHEBI:29105"/>
        <label>2</label>
    </ligand>
</feature>
<feature type="binding site" evidence="1">
    <location>
        <position position="107"/>
    </location>
    <ligand>
        <name>Zn(2+)</name>
        <dbReference type="ChEBI" id="CHEBI:29105"/>
        <label>2</label>
    </ligand>
</feature>
<feature type="binding site" evidence="1">
    <location>
        <position position="175"/>
    </location>
    <ligand>
        <name>NAD(+)</name>
        <dbReference type="ChEBI" id="CHEBI:57540"/>
    </ligand>
</feature>
<feature type="binding site" evidence="1">
    <location>
        <position position="195"/>
    </location>
    <ligand>
        <name>NAD(+)</name>
        <dbReference type="ChEBI" id="CHEBI:57540"/>
    </ligand>
</feature>
<feature type="binding site" evidence="1">
    <location>
        <position position="200"/>
    </location>
    <ligand>
        <name>NAD(+)</name>
        <dbReference type="ChEBI" id="CHEBI:57540"/>
    </ligand>
</feature>
<feature type="binding site" evidence="1">
    <location>
        <begin position="262"/>
        <end position="264"/>
    </location>
    <ligand>
        <name>NAD(+)</name>
        <dbReference type="ChEBI" id="CHEBI:57540"/>
    </ligand>
</feature>
<feature type="binding site" evidence="1">
    <location>
        <begin position="286"/>
        <end position="287"/>
    </location>
    <ligand>
        <name>NAD(+)</name>
        <dbReference type="ChEBI" id="CHEBI:57540"/>
    </ligand>
</feature>
<feature type="site" description="Important for catalytic activity for the proton relay mechanism but does not participate directly in the coordination of zinc atom" evidence="1">
    <location>
        <position position="148"/>
    </location>
</feature>
<comment type="function">
    <text evidence="1">Catalyzes the NAD(+)-dependent oxidation of L-threonine to 2-amino-3-ketobutyrate.</text>
</comment>
<comment type="catalytic activity">
    <reaction evidence="1">
        <text>L-threonine + NAD(+) = (2S)-2-amino-3-oxobutanoate + NADH + H(+)</text>
        <dbReference type="Rhea" id="RHEA:13161"/>
        <dbReference type="ChEBI" id="CHEBI:15378"/>
        <dbReference type="ChEBI" id="CHEBI:57540"/>
        <dbReference type="ChEBI" id="CHEBI:57926"/>
        <dbReference type="ChEBI" id="CHEBI:57945"/>
        <dbReference type="ChEBI" id="CHEBI:78948"/>
        <dbReference type="EC" id="1.1.1.103"/>
    </reaction>
</comment>
<comment type="cofactor">
    <cofactor evidence="1">
        <name>Zn(2+)</name>
        <dbReference type="ChEBI" id="CHEBI:29105"/>
    </cofactor>
    <text evidence="1">Binds 2 Zn(2+) ions per subunit.</text>
</comment>
<comment type="pathway">
    <text evidence="1">Amino-acid degradation; L-threonine degradation via oxydo-reductase pathway; glycine from L-threonine: step 1/2.</text>
</comment>
<comment type="subunit">
    <text evidence="1">Homotetramer.</text>
</comment>
<comment type="subcellular location">
    <subcellularLocation>
        <location evidence="1">Cytoplasm</location>
    </subcellularLocation>
</comment>
<comment type="similarity">
    <text evidence="1">Belongs to the zinc-containing alcohol dehydrogenase family.</text>
</comment>
<accession>Q3JID4</accession>
<proteinExistence type="inferred from homology"/>
<sequence>MKALAKLERGPGLTLTRVKKPEVGHNDVLIKIRRTAICGTDIHIWKWDDWAQKTIPVPMHVGHEYVGEIVEMGQEVRGFSIGDRVSGEGHITCGFCRNCRAGRRHLCRNTVGVGVNREGAFAEYLAIPAFNAFKIPPEISDDLAAIFDPFGNATHTALSFNLVGEDVLITGAGPIGVMAVAIAKHVGARNVVITDINDYRLELARKMGATRAVNVSRESLRDVMADLHMTEGFDVGLEMSGVPSAFTSLLESMNHGGKVALLGIPPAQTAIDWNQVIFKGLEIKGIYGREMFETWYKMVAMLQSGLDLSPIITHRFAVDDYEKGFAAMLSGESGKVILDWADA</sequence>
<evidence type="ECO:0000255" key="1">
    <source>
        <dbReference type="HAMAP-Rule" id="MF_00627"/>
    </source>
</evidence>
<name>TDH_BURP1</name>
<keyword id="KW-0963">Cytoplasm</keyword>
<keyword id="KW-0479">Metal-binding</keyword>
<keyword id="KW-0520">NAD</keyword>
<keyword id="KW-0560">Oxidoreductase</keyword>
<keyword id="KW-0862">Zinc</keyword>
<protein>
    <recommendedName>
        <fullName evidence="1">L-threonine 3-dehydrogenase</fullName>
        <shortName evidence="1">TDH</shortName>
        <ecNumber evidence="1">1.1.1.103</ecNumber>
    </recommendedName>
</protein>
<organism>
    <name type="scientific">Burkholderia pseudomallei (strain 1710b)</name>
    <dbReference type="NCBI Taxonomy" id="320372"/>
    <lineage>
        <taxon>Bacteria</taxon>
        <taxon>Pseudomonadati</taxon>
        <taxon>Pseudomonadota</taxon>
        <taxon>Betaproteobacteria</taxon>
        <taxon>Burkholderiales</taxon>
        <taxon>Burkholderiaceae</taxon>
        <taxon>Burkholderia</taxon>
        <taxon>pseudomallei group</taxon>
    </lineage>
</organism>